<evidence type="ECO:0000250" key="1">
    <source>
        <dbReference type="UniProtKB" id="Q9P253"/>
    </source>
</evidence>
<evidence type="ECO:0000255" key="2"/>
<evidence type="ECO:0000256" key="3">
    <source>
        <dbReference type="SAM" id="MobiDB-lite"/>
    </source>
</evidence>
<evidence type="ECO:0000269" key="4">
    <source>
    </source>
</evidence>
<evidence type="ECO:0000269" key="5">
    <source>
    </source>
</evidence>
<evidence type="ECO:0000305" key="6"/>
<name>VPS18_DANRE</name>
<comment type="function">
    <text evidence="1 4 5">Plays a role in vesicle-mediated protein trafficking to lysosomal compartments including the endocytic membrane transport pathways. Believed to act as a core component of the putative HOPS endosomal tethering complex which is proposed to be involved in the Rab5-to-Rab7 endosome conversion probably implicating MON1A/B, and via binding SNAREs and SNARE complexes to mediate tethering and docking events during SNARE-mediated membrane fusion (By similarity). May be involved in vesicle trafficking to the hepatocyte apical membrane and play a role in development of the intra-hepatic biliary tree. May target endosomes to the pigment granule in melanocytes. Essential for early embryonic development.</text>
</comment>
<comment type="subunit">
    <text evidence="1">Component of the homotypic fusion and vacuole protein sorting (HOPS) complex (By similarity).</text>
</comment>
<comment type="subcellular location">
    <subcellularLocation>
        <location evidence="1">Late endosome membrane</location>
        <topology evidence="1">Peripheral membrane protein</topology>
        <orientation evidence="1">Cytoplasmic side</orientation>
    </subcellularLocation>
    <subcellularLocation>
        <location evidence="1">Lysosome membrane</location>
        <topology evidence="1">Peripheral membrane protein</topology>
        <orientation evidence="1">Cytoplasmic side</orientation>
    </subcellularLocation>
    <text>Cytoplasmic, peripheral membrane protein associated with early endosomes and late endosomes/lysosomes.</text>
</comment>
<comment type="disruption phenotype">
    <text evidence="5">Mutants display hepatomegaly associated with large, vesicle-filled hepatocytes. They also have defects in pigmentation with reduced numbers of melanophores and no iridophores.</text>
</comment>
<comment type="similarity">
    <text evidence="6">Belongs to the VPS18 family.</text>
</comment>
<dbReference type="EMBL" id="AL929049">
    <property type="protein sequence ID" value="CAI20654.1"/>
    <property type="molecule type" value="Genomic_DNA"/>
</dbReference>
<dbReference type="EMBL" id="BX897725">
    <property type="protein sequence ID" value="CAI11898.1"/>
    <property type="molecule type" value="Genomic_DNA"/>
</dbReference>
<dbReference type="EMBL" id="AF506204">
    <property type="protein sequence ID" value="AAM34648.1"/>
    <property type="molecule type" value="mRNA"/>
</dbReference>
<dbReference type="EMBL" id="BC086828">
    <property type="protein sequence ID" value="AAH86828.1"/>
    <property type="molecule type" value="mRNA"/>
</dbReference>
<dbReference type="RefSeq" id="NP_775352.2">
    <property type="nucleotide sequence ID" value="NM_173245.2"/>
</dbReference>
<dbReference type="SMR" id="P59015"/>
<dbReference type="FunCoup" id="P59015">
    <property type="interactions" value="2796"/>
</dbReference>
<dbReference type="STRING" id="7955.ENSDARP00000094129"/>
<dbReference type="PaxDb" id="7955-ENSDARP00000094129"/>
<dbReference type="Ensembl" id="ENSDART00000103352">
    <property type="protein sequence ID" value="ENSDARP00000094129"/>
    <property type="gene ID" value="ENSDARG00000070433"/>
</dbReference>
<dbReference type="GeneID" id="100005887"/>
<dbReference type="KEGG" id="dre:100005887"/>
<dbReference type="AGR" id="ZFIN:ZDB-GENE-020419-33"/>
<dbReference type="CTD" id="57617"/>
<dbReference type="ZFIN" id="ZDB-GENE-020419-33">
    <property type="gene designation" value="vps18"/>
</dbReference>
<dbReference type="eggNOG" id="KOG2034">
    <property type="taxonomic scope" value="Eukaryota"/>
</dbReference>
<dbReference type="HOGENOM" id="CLU_003488_1_0_1"/>
<dbReference type="InParanoid" id="P59015"/>
<dbReference type="OMA" id="WIQREKW"/>
<dbReference type="OrthoDB" id="1845386at2759"/>
<dbReference type="PhylomeDB" id="P59015"/>
<dbReference type="TreeFam" id="TF105704"/>
<dbReference type="PRO" id="PR:P59015"/>
<dbReference type="Proteomes" id="UP000000437">
    <property type="component" value="Chromosome 20"/>
</dbReference>
<dbReference type="Bgee" id="ENSDARG00000070433">
    <property type="expression patterns" value="Expressed in cleaving embryo and 29 other cell types or tissues"/>
</dbReference>
<dbReference type="ExpressionAtlas" id="P59015">
    <property type="expression patterns" value="baseline"/>
</dbReference>
<dbReference type="GO" id="GO:0005768">
    <property type="term" value="C:endosome"/>
    <property type="evidence" value="ECO:0000318"/>
    <property type="project" value="GO_Central"/>
</dbReference>
<dbReference type="GO" id="GO:0030897">
    <property type="term" value="C:HOPS complex"/>
    <property type="evidence" value="ECO:0000318"/>
    <property type="project" value="GO_Central"/>
</dbReference>
<dbReference type="GO" id="GO:0031902">
    <property type="term" value="C:late endosome membrane"/>
    <property type="evidence" value="ECO:0007669"/>
    <property type="project" value="UniProtKB-SubCell"/>
</dbReference>
<dbReference type="GO" id="GO:0005765">
    <property type="term" value="C:lysosomal membrane"/>
    <property type="evidence" value="ECO:0007669"/>
    <property type="project" value="UniProtKB-SubCell"/>
</dbReference>
<dbReference type="GO" id="GO:0030674">
    <property type="term" value="F:protein-macromolecule adaptor activity"/>
    <property type="evidence" value="ECO:0000318"/>
    <property type="project" value="GO_Central"/>
</dbReference>
<dbReference type="GO" id="GO:0008270">
    <property type="term" value="F:zinc ion binding"/>
    <property type="evidence" value="ECO:0007669"/>
    <property type="project" value="UniProtKB-KW"/>
</dbReference>
<dbReference type="GO" id="GO:0045176">
    <property type="term" value="P:apical protein localization"/>
    <property type="evidence" value="ECO:0000315"/>
    <property type="project" value="ZFIN"/>
</dbReference>
<dbReference type="GO" id="GO:0015721">
    <property type="term" value="P:bile acid and bile salt transport"/>
    <property type="evidence" value="ECO:0000315"/>
    <property type="project" value="ZFIN"/>
</dbReference>
<dbReference type="GO" id="GO:0007032">
    <property type="term" value="P:endosome organization"/>
    <property type="evidence" value="ECO:0000318"/>
    <property type="project" value="GO_Central"/>
</dbReference>
<dbReference type="GO" id="GO:0008333">
    <property type="term" value="P:endosome to lysosome transport"/>
    <property type="evidence" value="ECO:0000315"/>
    <property type="project" value="ZFIN"/>
</dbReference>
<dbReference type="GO" id="GO:0043485">
    <property type="term" value="P:endosome to pigment granule transport"/>
    <property type="evidence" value="ECO:0000315"/>
    <property type="project" value="ZFIN"/>
</dbReference>
<dbReference type="GO" id="GO:0048069">
    <property type="term" value="P:eye pigmentation"/>
    <property type="evidence" value="ECO:0000315"/>
    <property type="project" value="ZFIN"/>
</dbReference>
<dbReference type="GO" id="GO:0006886">
    <property type="term" value="P:intracellular protein transport"/>
    <property type="evidence" value="ECO:0007669"/>
    <property type="project" value="InterPro"/>
</dbReference>
<dbReference type="GO" id="GO:0007040">
    <property type="term" value="P:lysosome organization"/>
    <property type="evidence" value="ECO:0000318"/>
    <property type="project" value="GO_Central"/>
</dbReference>
<dbReference type="GO" id="GO:0060036">
    <property type="term" value="P:notochord cell vacuolation"/>
    <property type="evidence" value="ECO:0000315"/>
    <property type="project" value="ZFIN"/>
</dbReference>
<dbReference type="GO" id="GO:0007634">
    <property type="term" value="P:optokinetic behavior"/>
    <property type="evidence" value="ECO:0000315"/>
    <property type="project" value="ZFIN"/>
</dbReference>
<dbReference type="GO" id="GO:0048284">
    <property type="term" value="P:organelle fusion"/>
    <property type="evidence" value="ECO:0000318"/>
    <property type="project" value="GO_Central"/>
</dbReference>
<dbReference type="GO" id="GO:0048757">
    <property type="term" value="P:pigment granule maturation"/>
    <property type="evidence" value="ECO:0000315"/>
    <property type="project" value="ZFIN"/>
</dbReference>
<dbReference type="GO" id="GO:0006904">
    <property type="term" value="P:vesicle docking involved in exocytosis"/>
    <property type="evidence" value="ECO:0000318"/>
    <property type="project" value="GO_Central"/>
</dbReference>
<dbReference type="CDD" id="cd16689">
    <property type="entry name" value="RING-H2_Vps18"/>
    <property type="match status" value="1"/>
</dbReference>
<dbReference type="InterPro" id="IPR000547">
    <property type="entry name" value="Clathrin_H-chain/VPS_repeat"/>
</dbReference>
<dbReference type="InterPro" id="IPR007810">
    <property type="entry name" value="Pep3_Vps18"/>
</dbReference>
<dbReference type="PANTHER" id="PTHR23323">
    <property type="entry name" value="VACUOLAR PROTEIN SORTING-ASSOCIATED PROTEIN"/>
    <property type="match status" value="1"/>
</dbReference>
<dbReference type="PANTHER" id="PTHR23323:SF26">
    <property type="entry name" value="VACUOLAR PROTEIN SORTING-ASSOCIATED PROTEIN 18 HOMOLOG"/>
    <property type="match status" value="1"/>
</dbReference>
<dbReference type="Pfam" id="PF05131">
    <property type="entry name" value="Pep3_Vps18"/>
    <property type="match status" value="1"/>
</dbReference>
<dbReference type="SUPFAM" id="SSF57850">
    <property type="entry name" value="RING/U-box"/>
    <property type="match status" value="1"/>
</dbReference>
<dbReference type="PROSITE" id="PS50236">
    <property type="entry name" value="CHCR"/>
    <property type="match status" value="1"/>
</dbReference>
<organism>
    <name type="scientific">Danio rerio</name>
    <name type="common">Zebrafish</name>
    <name type="synonym">Brachydanio rerio</name>
    <dbReference type="NCBI Taxonomy" id="7955"/>
    <lineage>
        <taxon>Eukaryota</taxon>
        <taxon>Metazoa</taxon>
        <taxon>Chordata</taxon>
        <taxon>Craniata</taxon>
        <taxon>Vertebrata</taxon>
        <taxon>Euteleostomi</taxon>
        <taxon>Actinopterygii</taxon>
        <taxon>Neopterygii</taxon>
        <taxon>Teleostei</taxon>
        <taxon>Ostariophysi</taxon>
        <taxon>Cypriniformes</taxon>
        <taxon>Danionidae</taxon>
        <taxon>Danioninae</taxon>
        <taxon>Danio</taxon>
    </lineage>
</organism>
<sequence>MASILDQYEDSQNIRQHSRMSTANIGITHSGFVNVRLEEEKPIFTKQRIDFSPPEKINQFSVCNNQLCMSLGKDTLLRIDLGKPDQPNQIELGRKDDSKVHRLFLDPTGSHLVICLTTNECVYLNRNTQKVRGLSRWRGHLIESIGWNKLIGSETNTGPILVGTSQGIIFEAEISASEGSLFNTNPDQYFRQVHYLEEDGKPAPVCCLEVERGLETKYFIIATTRKRLFQFVGKLAEGSEQQGFSSIFAQNQDLLPSFQEFPVNMGYSEITFYTSKLRSRPKTFAWMMGNGVLYGQLDYVRPDSLLSDVQVWEYTQDIDLNFVKPISIVLTQFHFLLLLPDRVRGICTLNGQVVHEDVFPEKFGTLQKMIKDPITGLVWIYTEKAVFRYHIQKEARDVWQMYMNMNKFDLAKEYCKDRPECLDMVLAKEAEHCFQNKRYLESAKCYALTQNYFEEIALKFIEAKQEEALKEFLIKKLVNLKPSEKTQITLLVTWLTELYLNRLGQLEADEGKQHLFLETREEFRTFLKSPKHKDCFYNNRSTIYDLLASHGDVDNMVYFSVIMQDYERVISHYCQHDDYSAALDVLSKHCDDKLFYKFSPVLMQHIPKKVVDAWIQMGNRLDPKNLIPALVNYSQMGSMQQINETIRYMEFCVYELDVKEEAIHNYLLSLYAKHKPDALLWYLEQAGTHVSDIHYDLKYALRLCSEHGYLQACVLVYKIMELYEEAVDLALKVDVDLAKSCADLPEDDEELRKKLWLKIARHVVQEEKDVKKAMNCLSSCNLLKIEDILPFFPDFVTIDHFKEAICSSLEEYNKHIEELKQEMEEATESAKRIREDIQEMRNKYGVVESQEKCATCDFPLLNRPFYLFLCGHMFHYDCLLQEVIPHLSVYKQNKLDELQKKLAATTQTTKARHKPREEDTVSLGKGQGSREQIKSDIDDIIACECVYCGELMIKSIDKPFIDPQKFDQEMSSWL</sequence>
<protein>
    <recommendedName>
        <fullName>Vacuolar protein sorting-associated protein 18 homolog</fullName>
    </recommendedName>
</protein>
<reference key="1">
    <citation type="journal article" date="2013" name="Nature">
        <title>The zebrafish reference genome sequence and its relationship to the human genome.</title>
        <authorList>
            <person name="Howe K."/>
            <person name="Clark M.D."/>
            <person name="Torroja C.F."/>
            <person name="Torrance J."/>
            <person name="Berthelot C."/>
            <person name="Muffato M."/>
            <person name="Collins J.E."/>
            <person name="Humphray S."/>
            <person name="McLaren K."/>
            <person name="Matthews L."/>
            <person name="McLaren S."/>
            <person name="Sealy I."/>
            <person name="Caccamo M."/>
            <person name="Churcher C."/>
            <person name="Scott C."/>
            <person name="Barrett J.C."/>
            <person name="Koch R."/>
            <person name="Rauch G.J."/>
            <person name="White S."/>
            <person name="Chow W."/>
            <person name="Kilian B."/>
            <person name="Quintais L.T."/>
            <person name="Guerra-Assuncao J.A."/>
            <person name="Zhou Y."/>
            <person name="Gu Y."/>
            <person name="Yen J."/>
            <person name="Vogel J.H."/>
            <person name="Eyre T."/>
            <person name="Redmond S."/>
            <person name="Banerjee R."/>
            <person name="Chi J."/>
            <person name="Fu B."/>
            <person name="Langley E."/>
            <person name="Maguire S.F."/>
            <person name="Laird G.K."/>
            <person name="Lloyd D."/>
            <person name="Kenyon E."/>
            <person name="Donaldson S."/>
            <person name="Sehra H."/>
            <person name="Almeida-King J."/>
            <person name="Loveland J."/>
            <person name="Trevanion S."/>
            <person name="Jones M."/>
            <person name="Quail M."/>
            <person name="Willey D."/>
            <person name="Hunt A."/>
            <person name="Burton J."/>
            <person name="Sims S."/>
            <person name="McLay K."/>
            <person name="Plumb B."/>
            <person name="Davis J."/>
            <person name="Clee C."/>
            <person name="Oliver K."/>
            <person name="Clark R."/>
            <person name="Riddle C."/>
            <person name="Elliot D."/>
            <person name="Threadgold G."/>
            <person name="Harden G."/>
            <person name="Ware D."/>
            <person name="Begum S."/>
            <person name="Mortimore B."/>
            <person name="Kerry G."/>
            <person name="Heath P."/>
            <person name="Phillimore B."/>
            <person name="Tracey A."/>
            <person name="Corby N."/>
            <person name="Dunn M."/>
            <person name="Johnson C."/>
            <person name="Wood J."/>
            <person name="Clark S."/>
            <person name="Pelan S."/>
            <person name="Griffiths G."/>
            <person name="Smith M."/>
            <person name="Glithero R."/>
            <person name="Howden P."/>
            <person name="Barker N."/>
            <person name="Lloyd C."/>
            <person name="Stevens C."/>
            <person name="Harley J."/>
            <person name="Holt K."/>
            <person name="Panagiotidis G."/>
            <person name="Lovell J."/>
            <person name="Beasley H."/>
            <person name="Henderson C."/>
            <person name="Gordon D."/>
            <person name="Auger K."/>
            <person name="Wright D."/>
            <person name="Collins J."/>
            <person name="Raisen C."/>
            <person name="Dyer L."/>
            <person name="Leung K."/>
            <person name="Robertson L."/>
            <person name="Ambridge K."/>
            <person name="Leongamornlert D."/>
            <person name="McGuire S."/>
            <person name="Gilderthorp R."/>
            <person name="Griffiths C."/>
            <person name="Manthravadi D."/>
            <person name="Nichol S."/>
            <person name="Barker G."/>
            <person name="Whitehead S."/>
            <person name="Kay M."/>
            <person name="Brown J."/>
            <person name="Murnane C."/>
            <person name="Gray E."/>
            <person name="Humphries M."/>
            <person name="Sycamore N."/>
            <person name="Barker D."/>
            <person name="Saunders D."/>
            <person name="Wallis J."/>
            <person name="Babbage A."/>
            <person name="Hammond S."/>
            <person name="Mashreghi-Mohammadi M."/>
            <person name="Barr L."/>
            <person name="Martin S."/>
            <person name="Wray P."/>
            <person name="Ellington A."/>
            <person name="Matthews N."/>
            <person name="Ellwood M."/>
            <person name="Woodmansey R."/>
            <person name="Clark G."/>
            <person name="Cooper J."/>
            <person name="Tromans A."/>
            <person name="Grafham D."/>
            <person name="Skuce C."/>
            <person name="Pandian R."/>
            <person name="Andrews R."/>
            <person name="Harrison E."/>
            <person name="Kimberley A."/>
            <person name="Garnett J."/>
            <person name="Fosker N."/>
            <person name="Hall R."/>
            <person name="Garner P."/>
            <person name="Kelly D."/>
            <person name="Bird C."/>
            <person name="Palmer S."/>
            <person name="Gehring I."/>
            <person name="Berger A."/>
            <person name="Dooley C.M."/>
            <person name="Ersan-Urun Z."/>
            <person name="Eser C."/>
            <person name="Geiger H."/>
            <person name="Geisler M."/>
            <person name="Karotki L."/>
            <person name="Kirn A."/>
            <person name="Konantz J."/>
            <person name="Konantz M."/>
            <person name="Oberlander M."/>
            <person name="Rudolph-Geiger S."/>
            <person name="Teucke M."/>
            <person name="Lanz C."/>
            <person name="Raddatz G."/>
            <person name="Osoegawa K."/>
            <person name="Zhu B."/>
            <person name="Rapp A."/>
            <person name="Widaa S."/>
            <person name="Langford C."/>
            <person name="Yang F."/>
            <person name="Schuster S.C."/>
            <person name="Carter N.P."/>
            <person name="Harrow J."/>
            <person name="Ning Z."/>
            <person name="Herrero J."/>
            <person name="Searle S.M."/>
            <person name="Enright A."/>
            <person name="Geisler R."/>
            <person name="Plasterk R.H."/>
            <person name="Lee C."/>
            <person name="Westerfield M."/>
            <person name="de Jong P.J."/>
            <person name="Zon L.I."/>
            <person name="Postlethwait J.H."/>
            <person name="Nusslein-Volhard C."/>
            <person name="Hubbard T.J."/>
            <person name="Roest Crollius H."/>
            <person name="Rogers J."/>
            <person name="Stemple D.L."/>
        </authorList>
    </citation>
    <scope>NUCLEOTIDE SEQUENCE [LARGE SCALE GENOMIC DNA]</scope>
    <source>
        <strain>Tuebingen</strain>
    </source>
</reference>
<reference key="2">
    <citation type="journal article" date="2002" name="Nat. Genet.">
        <title>Insertional mutagenesis in zebrafish rapidly identifies genes essential for early vertebrate development.</title>
        <authorList>
            <person name="Golling G."/>
            <person name="Amsterdam A."/>
            <person name="Sun Z."/>
            <person name="Antonelli M."/>
            <person name="Maldonado E."/>
            <person name="Chen W."/>
            <person name="Burgess S."/>
            <person name="Haldi M."/>
            <person name="Artzt K."/>
            <person name="Farrington S."/>
            <person name="Lin S.-Y."/>
            <person name="Nissen R.M."/>
            <person name="Hopkins N."/>
        </authorList>
    </citation>
    <scope>NUCLEOTIDE SEQUENCE [LARGE SCALE MRNA]</scope>
    <scope>FUNCTION</scope>
    <source>
        <tissue>Embryo</tissue>
    </source>
</reference>
<reference key="3">
    <citation type="submission" date="2004-12" db="EMBL/GenBank/DDBJ databases">
        <authorList>
            <consortium name="NIH - Zebrafish Gene Collection (ZGC) project"/>
        </authorList>
    </citation>
    <scope>NUCLEOTIDE SEQUENCE [LARGE SCALE MRNA]</scope>
    <source>
        <tissue>Ovary</tissue>
    </source>
</reference>
<reference key="4">
    <citation type="journal article" date="2005" name="Development">
        <title>A genetic screen in zebrafish identifies the mutants vps18, nf2 and foie gras as models of liver disease.</title>
        <authorList>
            <person name="Sadler K.C."/>
            <person name="Amsterdam A."/>
            <person name="Soroka C."/>
            <person name="Boyer J."/>
            <person name="Hopkins N."/>
        </authorList>
    </citation>
    <scope>FUNCTION</scope>
    <scope>DISRUPTION PHENOTYPE</scope>
</reference>
<accession>P59015</accession>
<accession>Q5SPB8</accession>
<proteinExistence type="evidence at transcript level"/>
<keyword id="KW-0175">Coiled coil</keyword>
<keyword id="KW-0217">Developmental protein</keyword>
<keyword id="KW-0967">Endosome</keyword>
<keyword id="KW-0458">Lysosome</keyword>
<keyword id="KW-0472">Membrane</keyword>
<keyword id="KW-0479">Metal-binding</keyword>
<keyword id="KW-0653">Protein transport</keyword>
<keyword id="KW-1185">Reference proteome</keyword>
<keyword id="KW-0813">Transport</keyword>
<keyword id="KW-0862">Zinc</keyword>
<keyword id="KW-0863">Zinc-finger</keyword>
<feature type="chain" id="PRO_0000055904" description="Vacuolar protein sorting-associated protein 18 homolog">
    <location>
        <begin position="1"/>
        <end position="974"/>
    </location>
</feature>
<feature type="repeat" description="CHCR">
    <location>
        <begin position="618"/>
        <end position="772"/>
    </location>
</feature>
<feature type="zinc finger region" description="RING-type">
    <location>
        <begin position="853"/>
        <end position="948"/>
    </location>
</feature>
<feature type="region of interest" description="Disordered" evidence="3">
    <location>
        <begin position="905"/>
        <end position="930"/>
    </location>
</feature>
<feature type="coiled-coil region" evidence="2">
    <location>
        <begin position="461"/>
        <end position="481"/>
    </location>
</feature>
<feature type="coiled-coil region" evidence="2">
    <location>
        <begin position="799"/>
        <end position="852"/>
    </location>
</feature>
<feature type="sequence conflict" description="In Ref. 2; AAM34648." evidence="6" ref="2">
    <original>FQE</original>
    <variation>SRN</variation>
    <location>
        <begin position="258"/>
        <end position="260"/>
    </location>
</feature>
<feature type="sequence conflict" description="In Ref. 2; AAM34648." evidence="6" ref="2">
    <original>P</original>
    <variation>S</variation>
    <location>
        <position position="745"/>
    </location>
</feature>
<gene>
    <name type="primary">vps18</name>
</gene>